<comment type="function">
    <text>Growth factor for endothelial cells. VEGF-B167 binds heparin and neuropilin-1 whereas the binding to neuropilin-1 of VEGF-B186 is regulated by proteolysis.</text>
</comment>
<comment type="subunit">
    <text evidence="4">Homodimer; disulfide-linked. Can also form heterodimer with VEGF.</text>
</comment>
<comment type="interaction">
    <interactant intactId="EBI-2799898">
        <id>P49765</id>
    </interactant>
    <interactant intactId="EBI-740929">
        <id>Q53G59</id>
        <label>KLHL12</label>
    </interactant>
    <organismsDiffer>false</organismsDiffer>
    <experiments>3</experiments>
</comment>
<comment type="subcellular location">
    <subcellularLocation>
        <location>Secreted</location>
    </subcellularLocation>
    <text>Secreted but remains associated to cells or to the extracellular matrix unless released by heparin.</text>
</comment>
<comment type="alternative products">
    <event type="alternative splicing"/>
    <isoform>
        <id>P49765-1</id>
        <name>VEGF-B186</name>
        <sequence type="displayed"/>
    </isoform>
    <isoform>
        <id>P49765-2</id>
        <name>VEGF-B167</name>
        <sequence type="described" ref="VSP_004639 VSP_004640"/>
    </isoform>
    <text>Additional isoforms seem to exist.</text>
</comment>
<comment type="tissue specificity">
    <text>Expressed in all tissues except liver. Highest levels found in heart, skeletal muscle and pancreas.</text>
</comment>
<comment type="PTM">
    <text evidence="1">VEGF-B186 is O-glycosylated.</text>
</comment>
<comment type="similarity">
    <text evidence="7">Belongs to the PDGF/VEGF growth factor family.</text>
</comment>
<accession>P49765</accession>
<accession>Q16528</accession>
<evidence type="ECO:0000250" key="1"/>
<evidence type="ECO:0000255" key="2"/>
<evidence type="ECO:0000256" key="3">
    <source>
        <dbReference type="SAM" id="MobiDB-lite"/>
    </source>
</evidence>
<evidence type="ECO:0000269" key="4">
    <source>
    </source>
</evidence>
<evidence type="ECO:0000303" key="5">
    <source>
    </source>
</evidence>
<evidence type="ECO:0000303" key="6">
    <source>
    </source>
</evidence>
<evidence type="ECO:0000305" key="7"/>
<evidence type="ECO:0007829" key="8">
    <source>
        <dbReference type="PDB" id="2C7W"/>
    </source>
</evidence>
<evidence type="ECO:0007829" key="9">
    <source>
        <dbReference type="PDB" id="2XAC"/>
    </source>
</evidence>
<feature type="signal peptide" evidence="2">
    <location>
        <begin position="1"/>
        <end position="21"/>
    </location>
</feature>
<feature type="chain" id="PRO_0000023398" description="Vascular endothelial growth factor B">
    <location>
        <begin position="22"/>
        <end position="207"/>
    </location>
</feature>
<feature type="region of interest" description="Disordered" evidence="3">
    <location>
        <begin position="122"/>
        <end position="207"/>
    </location>
</feature>
<feature type="compositionally biased region" description="Basic and acidic residues" evidence="3">
    <location>
        <begin position="122"/>
        <end position="139"/>
    </location>
</feature>
<feature type="compositionally biased region" description="Low complexity" evidence="3">
    <location>
        <begin position="174"/>
        <end position="207"/>
    </location>
</feature>
<feature type="disulfide bond" evidence="4">
    <location>
        <begin position="47"/>
        <end position="89"/>
    </location>
</feature>
<feature type="disulfide bond" description="Interchain" evidence="4">
    <location>
        <position position="72"/>
    </location>
</feature>
<feature type="disulfide bond" evidence="4">
    <location>
        <begin position="78"/>
        <end position="122"/>
    </location>
</feature>
<feature type="disulfide bond" description="Interchain" evidence="4">
    <location>
        <position position="81"/>
    </location>
</feature>
<feature type="disulfide bond" evidence="4">
    <location>
        <begin position="82"/>
        <end position="124"/>
    </location>
</feature>
<feature type="splice variant" id="VSP_004639" description="In isoform VEGF-B167." evidence="5 6">
    <original>RAATPHHRPQPRSVPGWDSAPGAPSPADITHPTPAPGPSAHAAPSTTSALTP</original>
    <variation>SPRPLCPRCTQHHQRPDPRTCRCRCRRRSFLRCQGRGLELNPDTCRCRKLRR</variation>
    <location>
        <begin position="137"/>
        <end position="188"/>
    </location>
</feature>
<feature type="splice variant" id="VSP_004640" description="In isoform VEGF-B167." evidence="5 6">
    <location>
        <begin position="189"/>
        <end position="207"/>
    </location>
</feature>
<feature type="turn" evidence="9">
    <location>
        <begin position="33"/>
        <end position="35"/>
    </location>
</feature>
<feature type="helix" evidence="8">
    <location>
        <begin position="38"/>
        <end position="45"/>
    </location>
</feature>
<feature type="strand" evidence="8">
    <location>
        <begin position="46"/>
        <end position="55"/>
    </location>
</feature>
<feature type="turn" evidence="9">
    <location>
        <begin position="58"/>
        <end position="60"/>
    </location>
</feature>
<feature type="strand" evidence="9">
    <location>
        <begin position="61"/>
        <end position="64"/>
    </location>
</feature>
<feature type="strand" evidence="8">
    <location>
        <begin position="66"/>
        <end position="81"/>
    </location>
</feature>
<feature type="strand" evidence="8">
    <location>
        <begin position="83"/>
        <end position="86"/>
    </location>
</feature>
<feature type="strand" evidence="8">
    <location>
        <begin position="88"/>
        <end position="105"/>
    </location>
</feature>
<feature type="strand" evidence="8">
    <location>
        <begin position="108"/>
        <end position="125"/>
    </location>
</feature>
<dbReference type="EMBL" id="U43368">
    <property type="protein sequence ID" value="AAA91462.1"/>
    <property type="molecule type" value="mRNA"/>
</dbReference>
<dbReference type="EMBL" id="U43369">
    <property type="protein sequence ID" value="AAA91463.1"/>
    <property type="molecule type" value="mRNA"/>
</dbReference>
<dbReference type="EMBL" id="U52819">
    <property type="protein sequence ID" value="AAC50721.1"/>
    <property type="molecule type" value="mRNA"/>
</dbReference>
<dbReference type="EMBL" id="U48801">
    <property type="protein sequence ID" value="AAB06274.1"/>
    <property type="molecule type" value="mRNA"/>
</dbReference>
<dbReference type="EMBL" id="BC008818">
    <property type="protein sequence ID" value="AAH08818.1"/>
    <property type="molecule type" value="mRNA"/>
</dbReference>
<dbReference type="CCDS" id="CCDS58144.1">
    <molecule id="P49765-2"/>
</dbReference>
<dbReference type="CCDS" id="CCDS8062.1">
    <molecule id="P49765-1"/>
</dbReference>
<dbReference type="RefSeq" id="NP_001230662.1">
    <molecule id="P49765-2"/>
    <property type="nucleotide sequence ID" value="NM_001243733.2"/>
</dbReference>
<dbReference type="RefSeq" id="NP_003368.1">
    <molecule id="P49765-1"/>
    <property type="nucleotide sequence ID" value="NM_003377.5"/>
</dbReference>
<dbReference type="PDB" id="2C7W">
    <property type="method" value="X-ray"/>
    <property type="resolution" value="2.48 A"/>
    <property type="chains" value="A/B=31-129"/>
</dbReference>
<dbReference type="PDB" id="2VWE">
    <property type="method" value="X-ray"/>
    <property type="resolution" value="3.40 A"/>
    <property type="chains" value="A/B=22-196"/>
</dbReference>
<dbReference type="PDB" id="2XAC">
    <property type="method" value="X-ray"/>
    <property type="resolution" value="2.71 A"/>
    <property type="chains" value="A/B=31-129"/>
</dbReference>
<dbReference type="PDB" id="6TKK">
    <property type="method" value="X-ray"/>
    <property type="resolution" value="1.06 A"/>
    <property type="chains" value="B=144-148"/>
</dbReference>
<dbReference type="PDBsum" id="2C7W"/>
<dbReference type="PDBsum" id="2VWE"/>
<dbReference type="PDBsum" id="2XAC"/>
<dbReference type="PDBsum" id="6TKK"/>
<dbReference type="SMR" id="P49765"/>
<dbReference type="BioGRID" id="113266">
    <property type="interactions" value="37"/>
</dbReference>
<dbReference type="ComplexPortal" id="CPX-7402">
    <property type="entry name" value="Vascular endothelial growth factor B complex"/>
</dbReference>
<dbReference type="DIP" id="DIP-6045N"/>
<dbReference type="FunCoup" id="P49765">
    <property type="interactions" value="982"/>
</dbReference>
<dbReference type="IntAct" id="P49765">
    <property type="interactions" value="25"/>
</dbReference>
<dbReference type="STRING" id="9606.ENSP00000311127"/>
<dbReference type="ChEMBL" id="CHEMBL3580488"/>
<dbReference type="DrugBank" id="DB08885">
    <property type="generic name" value="Aflibercept"/>
</dbReference>
<dbReference type="DrugBank" id="DB12818">
    <property type="generic name" value="NM-3"/>
</dbReference>
<dbReference type="DrugBank" id="DB14911">
    <property type="generic name" value="Risuteganib"/>
</dbReference>
<dbReference type="DrugBank" id="DB06461">
    <property type="generic name" value="Squalamine"/>
</dbReference>
<dbReference type="DrugBank" id="DB05075">
    <property type="generic name" value="TG-100801"/>
</dbReference>
<dbReference type="DrugCentral" id="P49765"/>
<dbReference type="TCDB" id="8.A.245.1.2">
    <property type="family name" value="the vascular endothelial growth factor (vegf) family"/>
</dbReference>
<dbReference type="GlyCosmos" id="P49765">
    <property type="glycosylation" value="1 site, 1 glycan"/>
</dbReference>
<dbReference type="GlyGen" id="P49765">
    <property type="glycosylation" value="1 site, 1 O-linked glycan (1 site)"/>
</dbReference>
<dbReference type="iPTMnet" id="P49765"/>
<dbReference type="PhosphoSitePlus" id="P49765"/>
<dbReference type="BioMuta" id="VEGFB"/>
<dbReference type="DMDM" id="17380554"/>
<dbReference type="jPOST" id="P49765"/>
<dbReference type="MassIVE" id="P49765"/>
<dbReference type="PaxDb" id="9606-ENSP00000311127"/>
<dbReference type="PeptideAtlas" id="P49765"/>
<dbReference type="ProteomicsDB" id="56103">
    <molecule id="P49765-1"/>
</dbReference>
<dbReference type="ProteomicsDB" id="56104">
    <molecule id="P49765-2"/>
</dbReference>
<dbReference type="ABCD" id="P49765">
    <property type="antibodies" value="1 sequenced antibody"/>
</dbReference>
<dbReference type="Antibodypedia" id="15308">
    <property type="antibodies" value="702 antibodies from 36 providers"/>
</dbReference>
<dbReference type="DNASU" id="7423"/>
<dbReference type="Ensembl" id="ENST00000309422.7">
    <molecule id="P49765-1"/>
    <property type="protein sequence ID" value="ENSP00000311127.2"/>
    <property type="gene ID" value="ENSG00000173511.10"/>
</dbReference>
<dbReference type="Ensembl" id="ENST00000426086.3">
    <molecule id="P49765-2"/>
    <property type="protein sequence ID" value="ENSP00000401550.2"/>
    <property type="gene ID" value="ENSG00000173511.10"/>
</dbReference>
<dbReference type="GeneID" id="7423"/>
<dbReference type="KEGG" id="hsa:7423"/>
<dbReference type="MANE-Select" id="ENST00000309422.7">
    <property type="protein sequence ID" value="ENSP00000311127.2"/>
    <property type="RefSeq nucleotide sequence ID" value="NM_003377.5"/>
    <property type="RefSeq protein sequence ID" value="NP_003368.1"/>
</dbReference>
<dbReference type="UCSC" id="uc001nyx.4">
    <molecule id="P49765-1"/>
    <property type="organism name" value="human"/>
</dbReference>
<dbReference type="AGR" id="HGNC:12681"/>
<dbReference type="CTD" id="7423"/>
<dbReference type="DisGeNET" id="7423"/>
<dbReference type="GeneCards" id="VEGFB"/>
<dbReference type="HGNC" id="HGNC:12681">
    <property type="gene designation" value="VEGFB"/>
</dbReference>
<dbReference type="HPA" id="ENSG00000173511">
    <property type="expression patterns" value="Low tissue specificity"/>
</dbReference>
<dbReference type="MalaCards" id="VEGFB"/>
<dbReference type="MIM" id="601398">
    <property type="type" value="gene"/>
</dbReference>
<dbReference type="neXtProt" id="NX_P49765"/>
<dbReference type="OpenTargets" id="ENSG00000173511"/>
<dbReference type="PharmGKB" id="PA37303"/>
<dbReference type="VEuPathDB" id="HostDB:ENSG00000173511"/>
<dbReference type="eggNOG" id="ENOG502SU5Y">
    <property type="taxonomic scope" value="Eukaryota"/>
</dbReference>
<dbReference type="GeneTree" id="ENSGT00940000161844"/>
<dbReference type="HOGENOM" id="CLU_1331530_0_0_1"/>
<dbReference type="InParanoid" id="P49765"/>
<dbReference type="OMA" id="KCEATRT"/>
<dbReference type="OrthoDB" id="6370328at2759"/>
<dbReference type="PAN-GO" id="P49765">
    <property type="GO annotations" value="13 GO annotations based on evolutionary models"/>
</dbReference>
<dbReference type="PhylomeDB" id="P49765"/>
<dbReference type="TreeFam" id="TF319554"/>
<dbReference type="PathwayCommons" id="P49765"/>
<dbReference type="Reactome" id="R-HSA-114608">
    <property type="pathway name" value="Platelet degranulation"/>
</dbReference>
<dbReference type="Reactome" id="R-HSA-194313">
    <property type="pathway name" value="VEGF ligand-receptor interactions"/>
</dbReference>
<dbReference type="Reactome" id="R-HSA-195399">
    <property type="pathway name" value="VEGF binds to VEGFR leading to receptor dimerization"/>
</dbReference>
<dbReference type="SignaLink" id="P49765"/>
<dbReference type="SIGNOR" id="P49765"/>
<dbReference type="BioGRID-ORCS" id="7423">
    <property type="hits" value="13 hits in 1160 CRISPR screens"/>
</dbReference>
<dbReference type="ChiTaRS" id="VEGFB">
    <property type="organism name" value="human"/>
</dbReference>
<dbReference type="EvolutionaryTrace" id="P49765"/>
<dbReference type="GeneWiki" id="Vascular_endothelial_growth_factor_B"/>
<dbReference type="GenomeRNAi" id="7423"/>
<dbReference type="Pharos" id="P49765">
    <property type="development level" value="Tclin"/>
</dbReference>
<dbReference type="PRO" id="PR:P49765"/>
<dbReference type="Proteomes" id="UP000005640">
    <property type="component" value="Chromosome 11"/>
</dbReference>
<dbReference type="RNAct" id="P49765">
    <property type="molecule type" value="protein"/>
</dbReference>
<dbReference type="Bgee" id="ENSG00000173511">
    <property type="expression patterns" value="Expressed in apex of heart and 163 other cell types or tissues"/>
</dbReference>
<dbReference type="ExpressionAtlas" id="P49765">
    <property type="expression patterns" value="baseline and differential"/>
</dbReference>
<dbReference type="GO" id="GO:0005576">
    <property type="term" value="C:extracellular region"/>
    <property type="evidence" value="ECO:0000304"/>
    <property type="project" value="Reactome"/>
</dbReference>
<dbReference type="GO" id="GO:0005615">
    <property type="term" value="C:extracellular space"/>
    <property type="evidence" value="ECO:0000314"/>
    <property type="project" value="UniProtKB"/>
</dbReference>
<dbReference type="GO" id="GO:0016020">
    <property type="term" value="C:membrane"/>
    <property type="evidence" value="ECO:0007669"/>
    <property type="project" value="InterPro"/>
</dbReference>
<dbReference type="GO" id="GO:0031093">
    <property type="term" value="C:platelet alpha granule lumen"/>
    <property type="evidence" value="ECO:0000304"/>
    <property type="project" value="Reactome"/>
</dbReference>
<dbReference type="GO" id="GO:0042056">
    <property type="term" value="F:chemoattractant activity"/>
    <property type="evidence" value="ECO:0000314"/>
    <property type="project" value="UniProtKB"/>
</dbReference>
<dbReference type="GO" id="GO:0008083">
    <property type="term" value="F:growth factor activity"/>
    <property type="evidence" value="ECO:0000318"/>
    <property type="project" value="GO_Central"/>
</dbReference>
<dbReference type="GO" id="GO:0008201">
    <property type="term" value="F:heparin binding"/>
    <property type="evidence" value="ECO:0007669"/>
    <property type="project" value="UniProtKB-KW"/>
</dbReference>
<dbReference type="GO" id="GO:0042802">
    <property type="term" value="F:identical protein binding"/>
    <property type="evidence" value="ECO:0007669"/>
    <property type="project" value="Ensembl"/>
</dbReference>
<dbReference type="GO" id="GO:0043183">
    <property type="term" value="F:vascular endothelial growth factor receptor 1 binding"/>
    <property type="evidence" value="ECO:0000353"/>
    <property type="project" value="UniProtKB"/>
</dbReference>
<dbReference type="GO" id="GO:0005172">
    <property type="term" value="F:vascular endothelial growth factor receptor binding"/>
    <property type="evidence" value="ECO:0000318"/>
    <property type="project" value="GO_Central"/>
</dbReference>
<dbReference type="GO" id="GO:0060048">
    <property type="term" value="P:cardiac muscle contraction"/>
    <property type="evidence" value="ECO:0007669"/>
    <property type="project" value="Ensembl"/>
</dbReference>
<dbReference type="GO" id="GO:0060976">
    <property type="term" value="P:coronary vasculature development"/>
    <property type="evidence" value="ECO:0007669"/>
    <property type="project" value="Ensembl"/>
</dbReference>
<dbReference type="GO" id="GO:0050930">
    <property type="term" value="P:induction of positive chemotaxis"/>
    <property type="evidence" value="ECO:0000314"/>
    <property type="project" value="UniProtKB"/>
</dbReference>
<dbReference type="GO" id="GO:0043066">
    <property type="term" value="P:negative regulation of apoptotic process"/>
    <property type="evidence" value="ECO:0000314"/>
    <property type="project" value="UniProtKB"/>
</dbReference>
<dbReference type="GO" id="GO:0010629">
    <property type="term" value="P:negative regulation of gene expression"/>
    <property type="evidence" value="ECO:0000314"/>
    <property type="project" value="UniProtKB"/>
</dbReference>
<dbReference type="GO" id="GO:0043524">
    <property type="term" value="P:negative regulation of neuron apoptotic process"/>
    <property type="evidence" value="ECO:0000314"/>
    <property type="project" value="UniProtKB"/>
</dbReference>
<dbReference type="GO" id="GO:0051781">
    <property type="term" value="P:positive regulation of cell division"/>
    <property type="evidence" value="ECO:0007669"/>
    <property type="project" value="UniProtKB-KW"/>
</dbReference>
<dbReference type="GO" id="GO:0008284">
    <property type="term" value="P:positive regulation of cell population proliferation"/>
    <property type="evidence" value="ECO:0007669"/>
    <property type="project" value="UniProtKB-ARBA"/>
</dbReference>
<dbReference type="GO" id="GO:0001938">
    <property type="term" value="P:positive regulation of endothelial cell proliferation"/>
    <property type="evidence" value="ECO:0000314"/>
    <property type="project" value="UniProtKB"/>
</dbReference>
<dbReference type="GO" id="GO:0070374">
    <property type="term" value="P:positive regulation of ERK1 and ERK2 cascade"/>
    <property type="evidence" value="ECO:0000314"/>
    <property type="project" value="UniProtKB"/>
</dbReference>
<dbReference type="GO" id="GO:0060754">
    <property type="term" value="P:positive regulation of mast cell chemotaxis"/>
    <property type="evidence" value="ECO:0000314"/>
    <property type="project" value="UniProtKB"/>
</dbReference>
<dbReference type="GO" id="GO:0050731">
    <property type="term" value="P:positive regulation of peptidyl-tyrosine phosphorylation"/>
    <property type="evidence" value="ECO:0000314"/>
    <property type="project" value="UniProtKB"/>
</dbReference>
<dbReference type="GO" id="GO:0051897">
    <property type="term" value="P:positive regulation of phosphatidylinositol 3-kinase/protein kinase B signal transduction"/>
    <property type="evidence" value="ECO:0000314"/>
    <property type="project" value="UniProtKB"/>
</dbReference>
<dbReference type="GO" id="GO:0030949">
    <property type="term" value="P:positive regulation of vascular endothelial growth factor receptor signaling pathway"/>
    <property type="evidence" value="ECO:0000314"/>
    <property type="project" value="UniProtKB"/>
</dbReference>
<dbReference type="GO" id="GO:0035470">
    <property type="term" value="P:positive regulation of vascular wound healing"/>
    <property type="evidence" value="ECO:0000314"/>
    <property type="project" value="UniProtKB"/>
</dbReference>
<dbReference type="GO" id="GO:0006493">
    <property type="term" value="P:protein O-linked glycosylation"/>
    <property type="evidence" value="ECO:0007669"/>
    <property type="project" value="Ensembl"/>
</dbReference>
<dbReference type="GO" id="GO:0001666">
    <property type="term" value="P:response to hypoxia"/>
    <property type="evidence" value="ECO:0000318"/>
    <property type="project" value="GO_Central"/>
</dbReference>
<dbReference type="GO" id="GO:0002040">
    <property type="term" value="P:sprouting angiogenesis"/>
    <property type="evidence" value="ECO:0000318"/>
    <property type="project" value="GO_Central"/>
</dbReference>
<dbReference type="GO" id="GO:0048010">
    <property type="term" value="P:vascular endothelial growth factor receptor signaling pathway"/>
    <property type="evidence" value="ECO:0000318"/>
    <property type="project" value="GO_Central"/>
</dbReference>
<dbReference type="GO" id="GO:0038084">
    <property type="term" value="P:vascular endothelial growth factor signaling pathway"/>
    <property type="evidence" value="ECO:0000318"/>
    <property type="project" value="GO_Central"/>
</dbReference>
<dbReference type="CDD" id="cd00135">
    <property type="entry name" value="PDGF"/>
    <property type="match status" value="1"/>
</dbReference>
<dbReference type="DisProt" id="DP02417"/>
<dbReference type="FunFam" id="2.10.90.10:FF:000030">
    <property type="entry name" value="Vascular endothelial growth factor B"/>
    <property type="match status" value="1"/>
</dbReference>
<dbReference type="Gene3D" id="2.10.90.10">
    <property type="entry name" value="Cystine-knot cytokines"/>
    <property type="match status" value="1"/>
</dbReference>
<dbReference type="InterPro" id="IPR029034">
    <property type="entry name" value="Cystine-knot_cytokine"/>
</dbReference>
<dbReference type="InterPro" id="IPR023581">
    <property type="entry name" value="PD_growth_factor_CS"/>
</dbReference>
<dbReference type="InterPro" id="IPR000072">
    <property type="entry name" value="PDGF/VEGF_dom"/>
</dbReference>
<dbReference type="InterPro" id="IPR050507">
    <property type="entry name" value="PDGF/VEGF_growth_factor"/>
</dbReference>
<dbReference type="PANTHER" id="PTHR12025">
    <property type="entry name" value="VASCULAR ENDOTHELIAL GROWTH FACTOR"/>
    <property type="match status" value="1"/>
</dbReference>
<dbReference type="PANTHER" id="PTHR12025:SF12">
    <property type="entry name" value="VASCULAR ENDOTHELIAL GROWTH FACTOR B"/>
    <property type="match status" value="1"/>
</dbReference>
<dbReference type="Pfam" id="PF00341">
    <property type="entry name" value="PDGF"/>
    <property type="match status" value="1"/>
</dbReference>
<dbReference type="SMART" id="SM00141">
    <property type="entry name" value="PDGF"/>
    <property type="match status" value="1"/>
</dbReference>
<dbReference type="SUPFAM" id="SSF57501">
    <property type="entry name" value="Cystine-knot cytokines"/>
    <property type="match status" value="1"/>
</dbReference>
<dbReference type="PROSITE" id="PS00249">
    <property type="entry name" value="PDGF_1"/>
    <property type="match status" value="1"/>
</dbReference>
<dbReference type="PROSITE" id="PS50278">
    <property type="entry name" value="PDGF_2"/>
    <property type="match status" value="1"/>
</dbReference>
<proteinExistence type="evidence at protein level"/>
<protein>
    <recommendedName>
        <fullName>Vascular endothelial growth factor B</fullName>
        <shortName>VEGF-B</shortName>
    </recommendedName>
    <alternativeName>
        <fullName>VEGF-related factor</fullName>
        <shortName>VRF</shortName>
    </alternativeName>
</protein>
<organism>
    <name type="scientific">Homo sapiens</name>
    <name type="common">Human</name>
    <dbReference type="NCBI Taxonomy" id="9606"/>
    <lineage>
        <taxon>Eukaryota</taxon>
        <taxon>Metazoa</taxon>
        <taxon>Chordata</taxon>
        <taxon>Craniata</taxon>
        <taxon>Vertebrata</taxon>
        <taxon>Euteleostomi</taxon>
        <taxon>Mammalia</taxon>
        <taxon>Eutheria</taxon>
        <taxon>Euarchontoglires</taxon>
        <taxon>Primates</taxon>
        <taxon>Haplorrhini</taxon>
        <taxon>Catarrhini</taxon>
        <taxon>Hominidae</taxon>
        <taxon>Homo</taxon>
    </lineage>
</organism>
<gene>
    <name type="primary">VEGFB</name>
    <name type="synonym">VRF</name>
</gene>
<reference key="1">
    <citation type="journal article" date="1996" name="Genome Res.">
        <title>Cloning and characterization of a novel human gene related to vascular endothelial growth factor.</title>
        <authorList>
            <person name="Grimmond S."/>
            <person name="Lagercrantz J."/>
            <person name="Drinkwater C."/>
            <person name="Silins G."/>
            <person name="Townson S."/>
            <person name="Pollock P."/>
            <person name="Gotley D."/>
            <person name="Carson E."/>
            <person name="Rakar S."/>
            <person name="Nordenskjoeld M."/>
            <person name="Ward L."/>
            <person name="Hayward N.K."/>
            <person name="Weber G."/>
        </authorList>
    </citation>
    <scope>NUCLEOTIDE SEQUENCE [MRNA] (ISOFORMS VEGF-B186 AND VEGF-B167)</scope>
    <source>
        <tissue>Fetal brain</tissue>
    </source>
</reference>
<reference key="2">
    <citation type="journal article" date="1996" name="J. Biol. Chem.">
        <title>Genomic organization of the mouse and human genes for vascular endothelial growth factor B (VEGF-B) and characterization of a second splice isoform.</title>
        <authorList>
            <person name="Olofsson B."/>
            <person name="Pajusola K."/>
            <person name="von Euler G."/>
            <person name="Chilov D."/>
            <person name="Alitalo K."/>
            <person name="Eriksson U."/>
        </authorList>
    </citation>
    <scope>NUCLEOTIDE SEQUENCE [MRNA] (ISOFORM VEGF-B186)</scope>
    <source>
        <tissue>Fibrosarcoma</tissue>
    </source>
</reference>
<reference key="3">
    <citation type="journal article" date="1996" name="Proc. Natl. Acad. Sci. U.S.A.">
        <title>Vascular endothelial growth factor B, a novel growth factor for endothelial cells.</title>
        <authorList>
            <person name="Olofsson B."/>
            <person name="Pajusola K."/>
            <person name="Kaipainen A."/>
            <person name="von Euler G."/>
            <person name="Joukov V."/>
            <person name="Saksela O."/>
            <person name="Orpana A."/>
            <person name="Pettersson R.F."/>
            <person name="Alitalo K."/>
            <person name="Eriksson U."/>
        </authorList>
    </citation>
    <scope>NUCLEOTIDE SEQUENCE [MRNA] (ISOFORM VEGF-B167)</scope>
</reference>
<reference key="4">
    <citation type="journal article" date="2004" name="Genome Res.">
        <title>The status, quality, and expansion of the NIH full-length cDNA project: the Mammalian Gene Collection (MGC).</title>
        <authorList>
            <consortium name="The MGC Project Team"/>
        </authorList>
    </citation>
    <scope>NUCLEOTIDE SEQUENCE [LARGE SCALE MRNA] (ISOFORM VEGF-B186)</scope>
    <source>
        <tissue>Tonsil</tissue>
    </source>
</reference>
<reference key="5">
    <citation type="journal article" date="2006" name="J. Mol. Biol.">
        <title>Crystal structure of human vascular endothelial growth factor-B: identification of amino acids important for receptor binding.</title>
        <authorList>
            <person name="Iyer S."/>
            <person name="Scotney P.D."/>
            <person name="Nash A.D."/>
            <person name="Ravi Acharya K."/>
        </authorList>
    </citation>
    <scope>X-RAY CRYSTALLOGRAPHY (2.48 ANGSTROMS) OF 31-129</scope>
    <scope>DISULFIDE BONDS</scope>
    <scope>SUBUNIT</scope>
</reference>
<name>VEGFB_HUMAN</name>
<sequence length="207" mass="21602">MSPLLRRLLLAALLQLAPAQAPVSQPDAPGHQRKVVSWIDVYTRATCQPREVVVPLTVELMGTVAKQLVPSCVTVQRCGGCCPDDGLECVPTGQHQVRMQILMIRYPSSQLGEMSLEEHSQCECRPKKKDSAVKPDRAATPHHRPQPRSVPGWDSAPGAPSPADITHPTPAPGPSAHAAPSTTSALTPGPAAAAADAAASSVAKGGA</sequence>
<keyword id="KW-0002">3D-structure</keyword>
<keyword id="KW-0025">Alternative splicing</keyword>
<keyword id="KW-1015">Disulfide bond</keyword>
<keyword id="KW-0325">Glycoprotein</keyword>
<keyword id="KW-0339">Growth factor</keyword>
<keyword id="KW-0358">Heparin-binding</keyword>
<keyword id="KW-0497">Mitogen</keyword>
<keyword id="KW-1267">Proteomics identification</keyword>
<keyword id="KW-1185">Reference proteome</keyword>
<keyword id="KW-0964">Secreted</keyword>
<keyword id="KW-0732">Signal</keyword>